<keyword id="KW-0963">Cytoplasm</keyword>
<keyword id="KW-0251">Elongation factor</keyword>
<keyword id="KW-0379">Hydroxylation</keyword>
<keyword id="KW-0648">Protein biosynthesis</keyword>
<name>EFP_ECOBW</name>
<dbReference type="EMBL" id="CP001396">
    <property type="protein sequence ID" value="ACR63023.1"/>
    <property type="molecule type" value="Genomic_DNA"/>
</dbReference>
<dbReference type="RefSeq" id="WP_000257278.1">
    <property type="nucleotide sequence ID" value="NC_012759.1"/>
</dbReference>
<dbReference type="SMR" id="C5A1D9"/>
<dbReference type="GeneID" id="93777677"/>
<dbReference type="KEGG" id="ebw:BWG_3860"/>
<dbReference type="HOGENOM" id="CLU_074944_0_0_6"/>
<dbReference type="UniPathway" id="UPA00345"/>
<dbReference type="GO" id="GO:0005829">
    <property type="term" value="C:cytosol"/>
    <property type="evidence" value="ECO:0007669"/>
    <property type="project" value="UniProtKB-ARBA"/>
</dbReference>
<dbReference type="GO" id="GO:0003746">
    <property type="term" value="F:translation elongation factor activity"/>
    <property type="evidence" value="ECO:0007669"/>
    <property type="project" value="UniProtKB-UniRule"/>
</dbReference>
<dbReference type="GO" id="GO:0043043">
    <property type="term" value="P:peptide biosynthetic process"/>
    <property type="evidence" value="ECO:0007669"/>
    <property type="project" value="InterPro"/>
</dbReference>
<dbReference type="CDD" id="cd04470">
    <property type="entry name" value="S1_EF-P_repeat_1"/>
    <property type="match status" value="1"/>
</dbReference>
<dbReference type="CDD" id="cd05794">
    <property type="entry name" value="S1_EF-P_repeat_2"/>
    <property type="match status" value="1"/>
</dbReference>
<dbReference type="FunFam" id="2.30.30.30:FF:000003">
    <property type="entry name" value="Elongation factor P"/>
    <property type="match status" value="1"/>
</dbReference>
<dbReference type="FunFam" id="2.40.50.140:FF:000004">
    <property type="entry name" value="Elongation factor P"/>
    <property type="match status" value="1"/>
</dbReference>
<dbReference type="FunFam" id="2.40.50.140:FF:000009">
    <property type="entry name" value="Elongation factor P"/>
    <property type="match status" value="1"/>
</dbReference>
<dbReference type="Gene3D" id="2.30.30.30">
    <property type="match status" value="1"/>
</dbReference>
<dbReference type="Gene3D" id="2.40.50.140">
    <property type="entry name" value="Nucleic acid-binding proteins"/>
    <property type="match status" value="2"/>
</dbReference>
<dbReference type="HAMAP" id="MF_00141">
    <property type="entry name" value="EF_P"/>
    <property type="match status" value="1"/>
</dbReference>
<dbReference type="InterPro" id="IPR015365">
    <property type="entry name" value="Elong-fact-P_C"/>
</dbReference>
<dbReference type="InterPro" id="IPR012340">
    <property type="entry name" value="NA-bd_OB-fold"/>
</dbReference>
<dbReference type="InterPro" id="IPR014722">
    <property type="entry name" value="Rib_uL2_dom2"/>
</dbReference>
<dbReference type="InterPro" id="IPR020599">
    <property type="entry name" value="Transl_elong_fac_P/YeiP"/>
</dbReference>
<dbReference type="InterPro" id="IPR013185">
    <property type="entry name" value="Transl_elong_KOW-like"/>
</dbReference>
<dbReference type="InterPro" id="IPR001059">
    <property type="entry name" value="Transl_elong_P/YeiP_cen"/>
</dbReference>
<dbReference type="InterPro" id="IPR013852">
    <property type="entry name" value="Transl_elong_P/YeiP_CS"/>
</dbReference>
<dbReference type="InterPro" id="IPR011768">
    <property type="entry name" value="Transl_elongation_fac_P"/>
</dbReference>
<dbReference type="InterPro" id="IPR008991">
    <property type="entry name" value="Translation_prot_SH3-like_sf"/>
</dbReference>
<dbReference type="NCBIfam" id="TIGR00038">
    <property type="entry name" value="efp"/>
    <property type="match status" value="1"/>
</dbReference>
<dbReference type="NCBIfam" id="NF001810">
    <property type="entry name" value="PRK00529.1"/>
    <property type="match status" value="1"/>
</dbReference>
<dbReference type="PANTHER" id="PTHR30053">
    <property type="entry name" value="ELONGATION FACTOR P"/>
    <property type="match status" value="1"/>
</dbReference>
<dbReference type="PANTHER" id="PTHR30053:SF12">
    <property type="entry name" value="ELONGATION FACTOR P (EF-P) FAMILY PROTEIN"/>
    <property type="match status" value="1"/>
</dbReference>
<dbReference type="Pfam" id="PF01132">
    <property type="entry name" value="EFP"/>
    <property type="match status" value="1"/>
</dbReference>
<dbReference type="Pfam" id="PF08207">
    <property type="entry name" value="EFP_N"/>
    <property type="match status" value="1"/>
</dbReference>
<dbReference type="Pfam" id="PF09285">
    <property type="entry name" value="Elong-fact-P_C"/>
    <property type="match status" value="1"/>
</dbReference>
<dbReference type="PIRSF" id="PIRSF005901">
    <property type="entry name" value="EF-P"/>
    <property type="match status" value="1"/>
</dbReference>
<dbReference type="SMART" id="SM01185">
    <property type="entry name" value="EFP"/>
    <property type="match status" value="1"/>
</dbReference>
<dbReference type="SMART" id="SM00841">
    <property type="entry name" value="Elong-fact-P_C"/>
    <property type="match status" value="1"/>
</dbReference>
<dbReference type="SUPFAM" id="SSF50249">
    <property type="entry name" value="Nucleic acid-binding proteins"/>
    <property type="match status" value="2"/>
</dbReference>
<dbReference type="SUPFAM" id="SSF50104">
    <property type="entry name" value="Translation proteins SH3-like domain"/>
    <property type="match status" value="1"/>
</dbReference>
<dbReference type="PROSITE" id="PS01275">
    <property type="entry name" value="EFP"/>
    <property type="match status" value="1"/>
</dbReference>
<evidence type="ECO:0000255" key="1">
    <source>
        <dbReference type="HAMAP-Rule" id="MF_00141"/>
    </source>
</evidence>
<organism>
    <name type="scientific">Escherichia coli (strain K12 / MC4100 / BW2952)</name>
    <dbReference type="NCBI Taxonomy" id="595496"/>
    <lineage>
        <taxon>Bacteria</taxon>
        <taxon>Pseudomonadati</taxon>
        <taxon>Pseudomonadota</taxon>
        <taxon>Gammaproteobacteria</taxon>
        <taxon>Enterobacterales</taxon>
        <taxon>Enterobacteriaceae</taxon>
        <taxon>Escherichia</taxon>
    </lineage>
</organism>
<proteinExistence type="inferred from homology"/>
<sequence>MATYYSNDFRAGLKIMLDGEPYAVEASEFVKPGKGQAFARVKLRRLLTGTRVEKTFKSTDSAEGADVVDMNLTYLYNDGEFWHFMNNETFEQLSADAKAIGDNAKWLLDQAECIVTLWNGQPISVTPPNFVELEIVDTDPGLKGDTAGTGGKPATLSTGAVVKVPLFVQIGEVIKVDTRSGEYVSRVK</sequence>
<reference key="1">
    <citation type="journal article" date="2009" name="J. Bacteriol.">
        <title>Genomic sequencing reveals regulatory mutations and recombinational events in the widely used MC4100 lineage of Escherichia coli K-12.</title>
        <authorList>
            <person name="Ferenci T."/>
            <person name="Zhou Z."/>
            <person name="Betteridge T."/>
            <person name="Ren Y."/>
            <person name="Liu Y."/>
            <person name="Feng L."/>
            <person name="Reeves P.R."/>
            <person name="Wang L."/>
        </authorList>
    </citation>
    <scope>NUCLEOTIDE SEQUENCE [LARGE SCALE GENOMIC DNA]</scope>
    <source>
        <strain>K12 / MC4100 / BW2952</strain>
    </source>
</reference>
<accession>C5A1D9</accession>
<comment type="function">
    <text evidence="1">Involved in peptide bond synthesis. Alleviates ribosome stalling that occurs when 3 or more consecutive Pro residues or the sequence PPG is present in a protein, possibly by augmenting the peptidyl transferase activity of the ribosome. Modification of Lys-34 is required for alleviation.</text>
</comment>
<comment type="pathway">
    <text evidence="1">Protein biosynthesis; polypeptide chain elongation.</text>
</comment>
<comment type="subcellular location">
    <subcellularLocation>
        <location evidence="1">Cytoplasm</location>
    </subcellularLocation>
</comment>
<comment type="PTM">
    <text evidence="1">Is beta-lysylated on the epsilon-amino group of Lys-34 by the combined action of EpmA and EpmB, and then hydroxylated on the C5 position of the same residue by EpmC. Lysylation is critical for the stimulatory effect of EF-P on peptide-bond formation. The lysylation moiety would extend toward the peptidyltransferase center and stabilize the terminal 3-CCA end of the tRNA. The hydroxylation of the C5 position on Lys-34 would allow additional potential stabilizing hydrogen-bond interactions with the P-tRNA.</text>
</comment>
<comment type="similarity">
    <text evidence="1">Belongs to the elongation factor P family.</text>
</comment>
<feature type="chain" id="PRO_1000203266" description="Elongation factor P">
    <location>
        <begin position="1"/>
        <end position="188"/>
    </location>
</feature>
<feature type="modified residue" description="N6-(3,6-diaminohexanoyl)-5-hydroxylysine" evidence="1">
    <location>
        <position position="34"/>
    </location>
</feature>
<gene>
    <name evidence="1" type="primary">efp</name>
    <name type="ordered locus">BWG_3860</name>
</gene>
<protein>
    <recommendedName>
        <fullName evidence="1">Elongation factor P</fullName>
        <shortName evidence="1">EF-P</shortName>
    </recommendedName>
</protein>